<comment type="function">
    <text evidence="1">Involved in pre-mRNA splicing.</text>
</comment>
<comment type="subunit">
    <text evidence="1">Associated with the spliceosome.</text>
</comment>
<comment type="subcellular location">
    <subcellularLocation>
        <location evidence="1">Nucleus</location>
    </subcellularLocation>
</comment>
<comment type="similarity">
    <text evidence="3">Belongs to the SYF2 family.</text>
</comment>
<keyword id="KW-0507">mRNA processing</keyword>
<keyword id="KW-0508">mRNA splicing</keyword>
<keyword id="KW-0539">Nucleus</keyword>
<keyword id="KW-1185">Reference proteome</keyword>
<keyword id="KW-0747">Spliceosome</keyword>
<accession>Q521C0</accession>
<accession>A4QT50</accession>
<accession>G4N501</accession>
<protein>
    <recommendedName>
        <fullName>Pre-mRNA-splicing factor SYF2</fullName>
    </recommendedName>
</protein>
<proteinExistence type="inferred from homology"/>
<organism>
    <name type="scientific">Pyricularia oryzae (strain 70-15 / ATCC MYA-4617 / FGSC 8958)</name>
    <name type="common">Rice blast fungus</name>
    <name type="synonym">Magnaporthe oryzae</name>
    <dbReference type="NCBI Taxonomy" id="242507"/>
    <lineage>
        <taxon>Eukaryota</taxon>
        <taxon>Fungi</taxon>
        <taxon>Dikarya</taxon>
        <taxon>Ascomycota</taxon>
        <taxon>Pezizomycotina</taxon>
        <taxon>Sordariomycetes</taxon>
        <taxon>Sordariomycetidae</taxon>
        <taxon>Magnaporthales</taxon>
        <taxon>Pyriculariaceae</taxon>
        <taxon>Pyricularia</taxon>
    </lineage>
</organism>
<feature type="chain" id="PRO_0000072377" description="Pre-mRNA-splicing factor SYF2">
    <location>
        <begin position="1"/>
        <end position="291"/>
    </location>
</feature>
<feature type="region of interest" description="Disordered" evidence="2">
    <location>
        <begin position="1"/>
        <end position="89"/>
    </location>
</feature>
<feature type="compositionally biased region" description="Polar residues" evidence="2">
    <location>
        <begin position="1"/>
        <end position="27"/>
    </location>
</feature>
<feature type="compositionally biased region" description="Low complexity" evidence="2">
    <location>
        <begin position="30"/>
        <end position="40"/>
    </location>
</feature>
<feature type="compositionally biased region" description="Polar residues" evidence="2">
    <location>
        <begin position="62"/>
        <end position="71"/>
    </location>
</feature>
<evidence type="ECO:0000250" key="1"/>
<evidence type="ECO:0000256" key="2">
    <source>
        <dbReference type="SAM" id="MobiDB-lite"/>
    </source>
</evidence>
<evidence type="ECO:0000305" key="3"/>
<gene>
    <name type="primary">SYF2</name>
    <name type="ORF">MGG_05180</name>
</gene>
<name>SYF2_PYRO7</name>
<reference key="1">
    <citation type="journal article" date="2005" name="Nature">
        <title>The genome sequence of the rice blast fungus Magnaporthe grisea.</title>
        <authorList>
            <person name="Dean R.A."/>
            <person name="Talbot N.J."/>
            <person name="Ebbole D.J."/>
            <person name="Farman M.L."/>
            <person name="Mitchell T.K."/>
            <person name="Orbach M.J."/>
            <person name="Thon M.R."/>
            <person name="Kulkarni R."/>
            <person name="Xu J.-R."/>
            <person name="Pan H."/>
            <person name="Read N.D."/>
            <person name="Lee Y.-H."/>
            <person name="Carbone I."/>
            <person name="Brown D."/>
            <person name="Oh Y.Y."/>
            <person name="Donofrio N."/>
            <person name="Jeong J.S."/>
            <person name="Soanes D.M."/>
            <person name="Djonovic S."/>
            <person name="Kolomiets E."/>
            <person name="Rehmeyer C."/>
            <person name="Li W."/>
            <person name="Harding M."/>
            <person name="Kim S."/>
            <person name="Lebrun M.-H."/>
            <person name="Bohnert H."/>
            <person name="Coughlan S."/>
            <person name="Butler J."/>
            <person name="Calvo S.E."/>
            <person name="Ma L.-J."/>
            <person name="Nicol R."/>
            <person name="Purcell S."/>
            <person name="Nusbaum C."/>
            <person name="Galagan J.E."/>
            <person name="Birren B.W."/>
        </authorList>
    </citation>
    <scope>NUCLEOTIDE SEQUENCE [LARGE SCALE GENOMIC DNA]</scope>
    <source>
        <strain>70-15 / ATCC MYA-4617 / FGSC 8958</strain>
    </source>
</reference>
<sequence length="291" mass="32647">MSDSTPTEAAVAESNTAGNEATTNSDKASPETTTTSTTEPGNTAKTAAAERMARFRALQARAKTSSDQNLKAATAESRREASDPSQLTALHRRHAIASHKILKADVEESGGDFERKRAWDWTAEESERWDKRVKKKEAARDNNAFQDYRHEAEKIYKRQLKNMPPDMERYAKDKMAAIDKAAAAGTLDIVETEDGELIAVDRAGTFYSTTDSTDFAKNKPDKEAIDRLVNDMKKAEDVAAKKRKARMAKNGEDDDVTYINDKNKQFNQKLARFYNKYTAEIRESFERGTMI</sequence>
<dbReference type="EMBL" id="CM001233">
    <property type="protein sequence ID" value="EHA52912.1"/>
    <property type="molecule type" value="Genomic_DNA"/>
</dbReference>
<dbReference type="RefSeq" id="XP_003712719.1">
    <property type="nucleotide sequence ID" value="XM_003712671.1"/>
</dbReference>
<dbReference type="SMR" id="Q521C0"/>
<dbReference type="FunCoup" id="Q521C0">
    <property type="interactions" value="124"/>
</dbReference>
<dbReference type="STRING" id="242507.Q521C0"/>
<dbReference type="EnsemblFungi" id="MGG_05180T0">
    <property type="protein sequence ID" value="MGG_05180T0"/>
    <property type="gene ID" value="MGG_05180"/>
</dbReference>
<dbReference type="GeneID" id="2675357"/>
<dbReference type="KEGG" id="mgr:MGG_05180"/>
<dbReference type="VEuPathDB" id="FungiDB:MGG_05180"/>
<dbReference type="eggNOG" id="KOG2609">
    <property type="taxonomic scope" value="Eukaryota"/>
</dbReference>
<dbReference type="HOGENOM" id="CLU_051065_0_1_1"/>
<dbReference type="InParanoid" id="Q521C0"/>
<dbReference type="OMA" id="RRRMHND"/>
<dbReference type="OrthoDB" id="199717at2759"/>
<dbReference type="Proteomes" id="UP000009058">
    <property type="component" value="Chromosome 3"/>
</dbReference>
<dbReference type="GO" id="GO:0071013">
    <property type="term" value="C:catalytic step 2 spliceosome"/>
    <property type="evidence" value="ECO:0007669"/>
    <property type="project" value="TreeGrafter"/>
</dbReference>
<dbReference type="GO" id="GO:0071014">
    <property type="term" value="C:post-mRNA release spliceosomal complex"/>
    <property type="evidence" value="ECO:0007669"/>
    <property type="project" value="EnsemblFungi"/>
</dbReference>
<dbReference type="GO" id="GO:0000974">
    <property type="term" value="C:Prp19 complex"/>
    <property type="evidence" value="ECO:0007669"/>
    <property type="project" value="EnsemblFungi"/>
</dbReference>
<dbReference type="GO" id="GO:0006397">
    <property type="term" value="P:mRNA processing"/>
    <property type="evidence" value="ECO:0007669"/>
    <property type="project" value="UniProtKB-KW"/>
</dbReference>
<dbReference type="GO" id="GO:0008380">
    <property type="term" value="P:RNA splicing"/>
    <property type="evidence" value="ECO:0007669"/>
    <property type="project" value="UniProtKB-KW"/>
</dbReference>
<dbReference type="InterPro" id="IPR013260">
    <property type="entry name" value="mRNA_splic_SYF2"/>
</dbReference>
<dbReference type="PANTHER" id="PTHR13264">
    <property type="entry name" value="GCIP-INTERACTING PROTEIN P29"/>
    <property type="match status" value="1"/>
</dbReference>
<dbReference type="PANTHER" id="PTHR13264:SF5">
    <property type="entry name" value="PRE-MRNA-SPLICING FACTOR SYF2"/>
    <property type="match status" value="1"/>
</dbReference>
<dbReference type="Pfam" id="PF08231">
    <property type="entry name" value="SYF2"/>
    <property type="match status" value="1"/>
</dbReference>